<name>MIAB_NITMU</name>
<comment type="function">
    <text evidence="1">Catalyzes the methylthiolation of N6-(dimethylallyl)adenosine (i(6)A), leading to the formation of 2-methylthio-N6-(dimethylallyl)adenosine (ms(2)i(6)A) at position 37 in tRNAs that read codons beginning with uridine.</text>
</comment>
<comment type="catalytic activity">
    <reaction evidence="1">
        <text>N(6)-dimethylallyladenosine(37) in tRNA + (sulfur carrier)-SH + AH2 + 2 S-adenosyl-L-methionine = 2-methylsulfanyl-N(6)-dimethylallyladenosine(37) in tRNA + (sulfur carrier)-H + 5'-deoxyadenosine + L-methionine + A + S-adenosyl-L-homocysteine + 2 H(+)</text>
        <dbReference type="Rhea" id="RHEA:37067"/>
        <dbReference type="Rhea" id="RHEA-COMP:10375"/>
        <dbReference type="Rhea" id="RHEA-COMP:10376"/>
        <dbReference type="Rhea" id="RHEA-COMP:14737"/>
        <dbReference type="Rhea" id="RHEA-COMP:14739"/>
        <dbReference type="ChEBI" id="CHEBI:13193"/>
        <dbReference type="ChEBI" id="CHEBI:15378"/>
        <dbReference type="ChEBI" id="CHEBI:17319"/>
        <dbReference type="ChEBI" id="CHEBI:17499"/>
        <dbReference type="ChEBI" id="CHEBI:29917"/>
        <dbReference type="ChEBI" id="CHEBI:57844"/>
        <dbReference type="ChEBI" id="CHEBI:57856"/>
        <dbReference type="ChEBI" id="CHEBI:59789"/>
        <dbReference type="ChEBI" id="CHEBI:64428"/>
        <dbReference type="ChEBI" id="CHEBI:74415"/>
        <dbReference type="ChEBI" id="CHEBI:74417"/>
        <dbReference type="EC" id="2.8.4.3"/>
    </reaction>
</comment>
<comment type="cofactor">
    <cofactor evidence="1">
        <name>[4Fe-4S] cluster</name>
        <dbReference type="ChEBI" id="CHEBI:49883"/>
    </cofactor>
    <text evidence="1">Binds 2 [4Fe-4S] clusters. One cluster is coordinated with 3 cysteines and an exchangeable S-adenosyl-L-methionine.</text>
</comment>
<comment type="subunit">
    <text evidence="1">Monomer.</text>
</comment>
<comment type="subcellular location">
    <subcellularLocation>
        <location evidence="1">Cytoplasm</location>
    </subcellularLocation>
</comment>
<comment type="similarity">
    <text evidence="1">Belongs to the methylthiotransferase family. MiaB subfamily.</text>
</comment>
<proteinExistence type="inferred from homology"/>
<protein>
    <recommendedName>
        <fullName evidence="1">tRNA-2-methylthio-N(6)-dimethylallyladenosine synthase</fullName>
        <ecNumber evidence="1">2.8.4.3</ecNumber>
    </recommendedName>
    <alternativeName>
        <fullName evidence="1">(Dimethylallyl)adenosine tRNA methylthiotransferase MiaB</fullName>
    </alternativeName>
    <alternativeName>
        <fullName evidence="1">tRNA-i(6)A37 methylthiotransferase</fullName>
    </alternativeName>
</protein>
<feature type="chain" id="PRO_0000374413" description="tRNA-2-methylthio-N(6)-dimethylallyladenosine synthase">
    <location>
        <begin position="1"/>
        <end position="474"/>
    </location>
</feature>
<feature type="domain" description="MTTase N-terminal" evidence="1">
    <location>
        <begin position="3"/>
        <end position="120"/>
    </location>
</feature>
<feature type="domain" description="Radical SAM core" evidence="2">
    <location>
        <begin position="143"/>
        <end position="382"/>
    </location>
</feature>
<feature type="domain" description="TRAM" evidence="1">
    <location>
        <begin position="381"/>
        <end position="444"/>
    </location>
</feature>
<feature type="binding site" evidence="1">
    <location>
        <position position="12"/>
    </location>
    <ligand>
        <name>[4Fe-4S] cluster</name>
        <dbReference type="ChEBI" id="CHEBI:49883"/>
        <label>1</label>
    </ligand>
</feature>
<feature type="binding site" evidence="1">
    <location>
        <position position="49"/>
    </location>
    <ligand>
        <name>[4Fe-4S] cluster</name>
        <dbReference type="ChEBI" id="CHEBI:49883"/>
        <label>1</label>
    </ligand>
</feature>
<feature type="binding site" evidence="1">
    <location>
        <position position="83"/>
    </location>
    <ligand>
        <name>[4Fe-4S] cluster</name>
        <dbReference type="ChEBI" id="CHEBI:49883"/>
        <label>1</label>
    </ligand>
</feature>
<feature type="binding site" evidence="1">
    <location>
        <position position="157"/>
    </location>
    <ligand>
        <name>[4Fe-4S] cluster</name>
        <dbReference type="ChEBI" id="CHEBI:49883"/>
        <label>2</label>
        <note>4Fe-4S-S-AdoMet</note>
    </ligand>
</feature>
<feature type="binding site" evidence="1">
    <location>
        <position position="161"/>
    </location>
    <ligand>
        <name>[4Fe-4S] cluster</name>
        <dbReference type="ChEBI" id="CHEBI:49883"/>
        <label>2</label>
        <note>4Fe-4S-S-AdoMet</note>
    </ligand>
</feature>
<feature type="binding site" evidence="1">
    <location>
        <position position="164"/>
    </location>
    <ligand>
        <name>[4Fe-4S] cluster</name>
        <dbReference type="ChEBI" id="CHEBI:49883"/>
        <label>2</label>
        <note>4Fe-4S-S-AdoMet</note>
    </ligand>
</feature>
<organism>
    <name type="scientific">Nitrosospira multiformis (strain ATCC 25196 / NCIMB 11849 / C 71)</name>
    <dbReference type="NCBI Taxonomy" id="323848"/>
    <lineage>
        <taxon>Bacteria</taxon>
        <taxon>Pseudomonadati</taxon>
        <taxon>Pseudomonadota</taxon>
        <taxon>Betaproteobacteria</taxon>
        <taxon>Nitrosomonadales</taxon>
        <taxon>Nitrosomonadaceae</taxon>
        <taxon>Nitrosospira</taxon>
    </lineage>
</organism>
<gene>
    <name evidence="1" type="primary">miaB</name>
    <name type="ordered locus">Nmul_A2692</name>
</gene>
<keyword id="KW-0004">4Fe-4S</keyword>
<keyword id="KW-0963">Cytoplasm</keyword>
<keyword id="KW-0408">Iron</keyword>
<keyword id="KW-0411">Iron-sulfur</keyword>
<keyword id="KW-0479">Metal-binding</keyword>
<keyword id="KW-1185">Reference proteome</keyword>
<keyword id="KW-0949">S-adenosyl-L-methionine</keyword>
<keyword id="KW-0808">Transferase</keyword>
<keyword id="KW-0819">tRNA processing</keyword>
<sequence length="474" mass="52681">MAKKLYIKTFGCQMNEYDSKKMADVLRDAQHMEKTDDPAAADVILFNTCSVREKAQEKVFHDLGRVRHLKAANPDLLIGVGGCVASQEGAEIVKRAPYVDLVFGPQTLHRLPQMISTRQITGRPQVDISFPEIEKFDHLPPARTEGVTAFVSIMEGCSKYCSFCVVPYTRGEEISRPLDDILTEIAGLTNLGVKEVTLLGQNVNAYRGRMQYAEEGELADFALLLEYLHEIPGIERIRYTTSHPREFTPRLIEAYKASPKLVSHVHLPVQSGSDRILAAMKRGYTSLEYKSIIRRLRAARPDISITSDFIVGFPGETEADFEATMKLIEAVNFDGSFSFIYSSRPGTPAAGLEDTTPHQVKLERLQRLQEKVELQAQAISVRMVGTTQRVLVEGLSRKDPGELSGRTDNNRVVNFPGSPEMIGKFAELKITAALSHTLRGENVRADDAPIEPEAAIFRRYGAGPDSIGNRDNLT</sequence>
<reference key="1">
    <citation type="submission" date="2005-08" db="EMBL/GenBank/DDBJ databases">
        <title>Complete sequence of chromosome 1 of Nitrosospira multiformis ATCC 25196.</title>
        <authorList>
            <person name="Copeland A."/>
            <person name="Lucas S."/>
            <person name="Lapidus A."/>
            <person name="Barry K."/>
            <person name="Detter J.C."/>
            <person name="Glavina T."/>
            <person name="Hammon N."/>
            <person name="Israni S."/>
            <person name="Pitluck S."/>
            <person name="Chain P."/>
            <person name="Malfatti S."/>
            <person name="Shin M."/>
            <person name="Vergez L."/>
            <person name="Schmutz J."/>
            <person name="Larimer F."/>
            <person name="Land M."/>
            <person name="Hauser L."/>
            <person name="Kyrpides N."/>
            <person name="Lykidis A."/>
            <person name="Richardson P."/>
        </authorList>
    </citation>
    <scope>NUCLEOTIDE SEQUENCE [LARGE SCALE GENOMIC DNA]</scope>
    <source>
        <strain>ATCC 25196 / NCIMB 11849 / C 71</strain>
    </source>
</reference>
<accession>Q2Y5J2</accession>
<dbReference type="EC" id="2.8.4.3" evidence="1"/>
<dbReference type="EMBL" id="CP000103">
    <property type="protein sequence ID" value="ABB75979.1"/>
    <property type="molecule type" value="Genomic_DNA"/>
</dbReference>
<dbReference type="RefSeq" id="WP_011381971.1">
    <property type="nucleotide sequence ID" value="NC_007614.1"/>
</dbReference>
<dbReference type="SMR" id="Q2Y5J2"/>
<dbReference type="STRING" id="323848.Nmul_A2692"/>
<dbReference type="KEGG" id="nmu:Nmul_A2692"/>
<dbReference type="eggNOG" id="COG0621">
    <property type="taxonomic scope" value="Bacteria"/>
</dbReference>
<dbReference type="HOGENOM" id="CLU_018697_2_0_4"/>
<dbReference type="OrthoDB" id="9805215at2"/>
<dbReference type="Proteomes" id="UP000002718">
    <property type="component" value="Chromosome"/>
</dbReference>
<dbReference type="GO" id="GO:0005829">
    <property type="term" value="C:cytosol"/>
    <property type="evidence" value="ECO:0007669"/>
    <property type="project" value="TreeGrafter"/>
</dbReference>
<dbReference type="GO" id="GO:0051539">
    <property type="term" value="F:4 iron, 4 sulfur cluster binding"/>
    <property type="evidence" value="ECO:0007669"/>
    <property type="project" value="UniProtKB-UniRule"/>
</dbReference>
<dbReference type="GO" id="GO:0046872">
    <property type="term" value="F:metal ion binding"/>
    <property type="evidence" value="ECO:0007669"/>
    <property type="project" value="UniProtKB-KW"/>
</dbReference>
<dbReference type="GO" id="GO:0035597">
    <property type="term" value="F:N6-isopentenyladenosine methylthiotransferase activity"/>
    <property type="evidence" value="ECO:0007669"/>
    <property type="project" value="TreeGrafter"/>
</dbReference>
<dbReference type="CDD" id="cd01335">
    <property type="entry name" value="Radical_SAM"/>
    <property type="match status" value="1"/>
</dbReference>
<dbReference type="FunFam" id="3.40.50.12160:FF:000001">
    <property type="entry name" value="tRNA-2-methylthio-N(6)-dimethylallyladenosine synthase"/>
    <property type="match status" value="1"/>
</dbReference>
<dbReference type="FunFam" id="3.80.30.20:FF:000001">
    <property type="entry name" value="tRNA-2-methylthio-N(6)-dimethylallyladenosine synthase 2"/>
    <property type="match status" value="1"/>
</dbReference>
<dbReference type="Gene3D" id="3.40.50.12160">
    <property type="entry name" value="Methylthiotransferase, N-terminal domain"/>
    <property type="match status" value="1"/>
</dbReference>
<dbReference type="Gene3D" id="3.80.30.20">
    <property type="entry name" value="tm_1862 like domain"/>
    <property type="match status" value="1"/>
</dbReference>
<dbReference type="HAMAP" id="MF_01864">
    <property type="entry name" value="tRNA_metthiotr_MiaB"/>
    <property type="match status" value="1"/>
</dbReference>
<dbReference type="InterPro" id="IPR006638">
    <property type="entry name" value="Elp3/MiaA/NifB-like_rSAM"/>
</dbReference>
<dbReference type="InterPro" id="IPR005839">
    <property type="entry name" value="Methylthiotransferase"/>
</dbReference>
<dbReference type="InterPro" id="IPR020612">
    <property type="entry name" value="Methylthiotransferase_CS"/>
</dbReference>
<dbReference type="InterPro" id="IPR013848">
    <property type="entry name" value="Methylthiotransferase_N"/>
</dbReference>
<dbReference type="InterPro" id="IPR038135">
    <property type="entry name" value="Methylthiotransferase_N_sf"/>
</dbReference>
<dbReference type="InterPro" id="IPR006463">
    <property type="entry name" value="MiaB_methiolase"/>
</dbReference>
<dbReference type="InterPro" id="IPR007197">
    <property type="entry name" value="rSAM"/>
</dbReference>
<dbReference type="InterPro" id="IPR023404">
    <property type="entry name" value="rSAM_horseshoe"/>
</dbReference>
<dbReference type="InterPro" id="IPR002792">
    <property type="entry name" value="TRAM_dom"/>
</dbReference>
<dbReference type="NCBIfam" id="TIGR01574">
    <property type="entry name" value="miaB-methiolase"/>
    <property type="match status" value="1"/>
</dbReference>
<dbReference type="NCBIfam" id="TIGR00089">
    <property type="entry name" value="MiaB/RimO family radical SAM methylthiotransferase"/>
    <property type="match status" value="1"/>
</dbReference>
<dbReference type="PANTHER" id="PTHR43020">
    <property type="entry name" value="CDK5 REGULATORY SUBUNIT-ASSOCIATED PROTEIN 1"/>
    <property type="match status" value="1"/>
</dbReference>
<dbReference type="PANTHER" id="PTHR43020:SF2">
    <property type="entry name" value="MITOCHONDRIAL TRNA METHYLTHIOTRANSFERASE CDK5RAP1"/>
    <property type="match status" value="1"/>
</dbReference>
<dbReference type="Pfam" id="PF04055">
    <property type="entry name" value="Radical_SAM"/>
    <property type="match status" value="1"/>
</dbReference>
<dbReference type="Pfam" id="PF01938">
    <property type="entry name" value="TRAM"/>
    <property type="match status" value="1"/>
</dbReference>
<dbReference type="Pfam" id="PF00919">
    <property type="entry name" value="UPF0004"/>
    <property type="match status" value="1"/>
</dbReference>
<dbReference type="SFLD" id="SFLDF00273">
    <property type="entry name" value="(dimethylallyl)adenosine_tRNA"/>
    <property type="match status" value="1"/>
</dbReference>
<dbReference type="SFLD" id="SFLDG01082">
    <property type="entry name" value="B12-binding_domain_containing"/>
    <property type="match status" value="1"/>
</dbReference>
<dbReference type="SFLD" id="SFLDS00029">
    <property type="entry name" value="Radical_SAM"/>
    <property type="match status" value="1"/>
</dbReference>
<dbReference type="SMART" id="SM00729">
    <property type="entry name" value="Elp3"/>
    <property type="match status" value="1"/>
</dbReference>
<dbReference type="SUPFAM" id="SSF102114">
    <property type="entry name" value="Radical SAM enzymes"/>
    <property type="match status" value="1"/>
</dbReference>
<dbReference type="PROSITE" id="PS51449">
    <property type="entry name" value="MTTASE_N"/>
    <property type="match status" value="1"/>
</dbReference>
<dbReference type="PROSITE" id="PS01278">
    <property type="entry name" value="MTTASE_RADICAL"/>
    <property type="match status" value="1"/>
</dbReference>
<dbReference type="PROSITE" id="PS51918">
    <property type="entry name" value="RADICAL_SAM"/>
    <property type="match status" value="1"/>
</dbReference>
<dbReference type="PROSITE" id="PS50926">
    <property type="entry name" value="TRAM"/>
    <property type="match status" value="1"/>
</dbReference>
<evidence type="ECO:0000255" key="1">
    <source>
        <dbReference type="HAMAP-Rule" id="MF_01864"/>
    </source>
</evidence>
<evidence type="ECO:0000255" key="2">
    <source>
        <dbReference type="PROSITE-ProRule" id="PRU01266"/>
    </source>
</evidence>